<protein>
    <recommendedName>
        <fullName evidence="9">Mannosyltransferase APTG1</fullName>
        <ecNumber>2.4.1.-</ecNumber>
    </recommendedName>
    <alternativeName>
        <fullName evidence="6">Glycosyltransferase 22</fullName>
    </alternativeName>
    <alternativeName>
        <fullName evidence="7 8">Protein ABNORMAL POLLEN TUBE GUIDANCE 1</fullName>
    </alternativeName>
</protein>
<evidence type="ECO:0000255" key="1"/>
<evidence type="ECO:0000255" key="2">
    <source>
        <dbReference type="PROSITE-ProRule" id="PRU00498"/>
    </source>
</evidence>
<evidence type="ECO:0000256" key="3">
    <source>
        <dbReference type="SAM" id="MobiDB-lite"/>
    </source>
</evidence>
<evidence type="ECO:0000269" key="4">
    <source>
    </source>
</evidence>
<evidence type="ECO:0000269" key="5">
    <source>
    </source>
</evidence>
<evidence type="ECO:0000303" key="6">
    <source>
    </source>
</evidence>
<evidence type="ECO:0000303" key="7">
    <source>
    </source>
</evidence>
<evidence type="ECO:0000303" key="8">
    <source>
    </source>
</evidence>
<evidence type="ECO:0000305" key="9"/>
<evidence type="ECO:0000312" key="10">
    <source>
        <dbReference type="Araport" id="AT5G14850"/>
    </source>
</evidence>
<evidence type="ECO:0000312" key="11">
    <source>
        <dbReference type="EMBL" id="CAC01884.1"/>
    </source>
</evidence>
<accession>Q94A15</accession>
<accession>Q9LEQ5</accession>
<comment type="function">
    <text evidence="4 5">Mannosyltransferase involved in glycosylphosphatidylinositol-anchor biosynthesis (PubMed:24963069). Required for the pollen tube micropylar guidance and embryo development by regulating GPI-anchor mediated protein localization (e.g. COBL10 and A36) (PubMed:24963069, PubMed:27872247).</text>
</comment>
<comment type="subcellular location">
    <subcellularLocation>
        <location evidence="4">Endoplasmic reticulum membrane</location>
        <topology evidence="1">Multi-pass membrane protein</topology>
    </subcellularLocation>
</comment>
<comment type="tissue specificity">
    <text evidence="4">Mostly expressed, mainly in vascular tissues, in leaves, roots, stems, flowers, siliques and pollen, and, to a lower extent, in seedlings.</text>
</comment>
<comment type="developmental stage">
    <text evidence="4">Expressed in vascular tissue of seedlings, leaves, root tips, inflorescence stems and flowers (PubMed:24963069). In pistils, detected in the ovary walls, styles, mature embryo sacs and developing embryos (PubMed:24963069). In pollen grains, mostly present in mature grains at anthesis and in germinated pollen tubes (PubMed:24963069).</text>
</comment>
<comment type="disruption phenotype">
    <text evidence="4 5">Embryo lethality at the globular or earlier stages (PubMed:24963069). Compromised pollen tubes micropylar guidance, but normal pollen germination and tube growth, associated with an abnormal localization of GPI-anchored proteins (e.g. COBL10) (PubMed:24963069). Impaired apical plasma membrane localization of COBL10 in pollen tubes, important for the growth of pollen tubes in the transmitting tract of pistil (PubMed:24963069). Lost A36 plasma membrane and cytoplasmic punctate localization which displays a constitutive reticular localization (PubMed:27872247).</text>
</comment>
<comment type="similarity">
    <text evidence="9">Belongs to the glycosyltransferase 22 family.</text>
</comment>
<comment type="sequence caution" evidence="9">
    <conflict type="erroneous gene model prediction">
        <sequence resource="EMBL-CDS" id="CAC01884"/>
    </conflict>
</comment>
<organism>
    <name type="scientific">Arabidopsis thaliana</name>
    <name type="common">Mouse-ear cress</name>
    <dbReference type="NCBI Taxonomy" id="3702"/>
    <lineage>
        <taxon>Eukaryota</taxon>
        <taxon>Viridiplantae</taxon>
        <taxon>Streptophyta</taxon>
        <taxon>Embryophyta</taxon>
        <taxon>Tracheophyta</taxon>
        <taxon>Spermatophyta</taxon>
        <taxon>Magnoliopsida</taxon>
        <taxon>eudicotyledons</taxon>
        <taxon>Gunneridae</taxon>
        <taxon>Pentapetalae</taxon>
        <taxon>rosids</taxon>
        <taxon>malvids</taxon>
        <taxon>Brassicales</taxon>
        <taxon>Brassicaceae</taxon>
        <taxon>Camelineae</taxon>
        <taxon>Arabidopsis</taxon>
    </lineage>
</organism>
<name>APTG1_ARATH</name>
<gene>
    <name evidence="7 8" type="primary">APTG1</name>
    <name evidence="6" type="synonym">GT22</name>
    <name evidence="10" type="ordered locus">At5g14850</name>
    <name evidence="11" type="ORF">T9L3.150</name>
</gene>
<proteinExistence type="evidence at transcript level"/>
<reference key="1">
    <citation type="journal article" date="2014" name="Plant J.">
        <title>The plant glycosyltransferase clone collection for functional genomics.</title>
        <authorList>
            <person name="Lao J."/>
            <person name="Oikawa A."/>
            <person name="Bromley J.R."/>
            <person name="McInerney P."/>
            <person name="Suttangkakul A."/>
            <person name="Smith-Moritz A.M."/>
            <person name="Plahar H."/>
            <person name="Chiu T.-Y."/>
            <person name="Gonzalez Fernandez-Nino S.M.G."/>
            <person name="Ebert B."/>
            <person name="Yang F."/>
            <person name="Christiansen K.M."/>
            <person name="Hansen S.F."/>
            <person name="Stonebloom S."/>
            <person name="Adams P.D."/>
            <person name="Ronald P.C."/>
            <person name="Hillson N.J."/>
            <person name="Hadi M.Z."/>
            <person name="Vega-Sanchez M.E."/>
            <person name="Loque D."/>
            <person name="Scheller H.V."/>
            <person name="Heazlewood J.L."/>
        </authorList>
    </citation>
    <scope>NUCLEOTIDE SEQUENCE [MRNA]</scope>
    <source>
        <strain>cv. Columbia</strain>
    </source>
</reference>
<reference key="2">
    <citation type="journal article" date="2000" name="Nature">
        <title>Sequence and analysis of chromosome 5 of the plant Arabidopsis thaliana.</title>
        <authorList>
            <person name="Tabata S."/>
            <person name="Kaneko T."/>
            <person name="Nakamura Y."/>
            <person name="Kotani H."/>
            <person name="Kato T."/>
            <person name="Asamizu E."/>
            <person name="Miyajima N."/>
            <person name="Sasamoto S."/>
            <person name="Kimura T."/>
            <person name="Hosouchi T."/>
            <person name="Kawashima K."/>
            <person name="Kohara M."/>
            <person name="Matsumoto M."/>
            <person name="Matsuno A."/>
            <person name="Muraki A."/>
            <person name="Nakayama S."/>
            <person name="Nakazaki N."/>
            <person name="Naruo K."/>
            <person name="Okumura S."/>
            <person name="Shinpo S."/>
            <person name="Takeuchi C."/>
            <person name="Wada T."/>
            <person name="Watanabe A."/>
            <person name="Yamada M."/>
            <person name="Yasuda M."/>
            <person name="Sato S."/>
            <person name="de la Bastide M."/>
            <person name="Huang E."/>
            <person name="Spiegel L."/>
            <person name="Gnoj L."/>
            <person name="O'Shaughnessy A."/>
            <person name="Preston R."/>
            <person name="Habermann K."/>
            <person name="Murray J."/>
            <person name="Johnson D."/>
            <person name="Rohlfing T."/>
            <person name="Nelson J."/>
            <person name="Stoneking T."/>
            <person name="Pepin K."/>
            <person name="Spieth J."/>
            <person name="Sekhon M."/>
            <person name="Armstrong J."/>
            <person name="Becker M."/>
            <person name="Belter E."/>
            <person name="Cordum H."/>
            <person name="Cordes M."/>
            <person name="Courtney L."/>
            <person name="Courtney W."/>
            <person name="Dante M."/>
            <person name="Du H."/>
            <person name="Edwards J."/>
            <person name="Fryman J."/>
            <person name="Haakensen B."/>
            <person name="Lamar E."/>
            <person name="Latreille P."/>
            <person name="Leonard S."/>
            <person name="Meyer R."/>
            <person name="Mulvaney E."/>
            <person name="Ozersky P."/>
            <person name="Riley A."/>
            <person name="Strowmatt C."/>
            <person name="Wagner-McPherson C."/>
            <person name="Wollam A."/>
            <person name="Yoakum M."/>
            <person name="Bell M."/>
            <person name="Dedhia N."/>
            <person name="Parnell L."/>
            <person name="Shah R."/>
            <person name="Rodriguez M."/>
            <person name="Hoon See L."/>
            <person name="Vil D."/>
            <person name="Baker J."/>
            <person name="Kirchoff K."/>
            <person name="Toth K."/>
            <person name="King L."/>
            <person name="Bahret A."/>
            <person name="Miller B."/>
            <person name="Marra M.A."/>
            <person name="Martienssen R."/>
            <person name="McCombie W.R."/>
            <person name="Wilson R.K."/>
            <person name="Murphy G."/>
            <person name="Bancroft I."/>
            <person name="Volckaert G."/>
            <person name="Wambutt R."/>
            <person name="Duesterhoeft A."/>
            <person name="Stiekema W."/>
            <person name="Pohl T."/>
            <person name="Entian K.-D."/>
            <person name="Terryn N."/>
            <person name="Hartley N."/>
            <person name="Bent E."/>
            <person name="Johnson S."/>
            <person name="Langham S.-A."/>
            <person name="McCullagh B."/>
            <person name="Robben J."/>
            <person name="Grymonprez B."/>
            <person name="Zimmermann W."/>
            <person name="Ramsperger U."/>
            <person name="Wedler H."/>
            <person name="Balke K."/>
            <person name="Wedler E."/>
            <person name="Peters S."/>
            <person name="van Staveren M."/>
            <person name="Dirkse W."/>
            <person name="Mooijman P."/>
            <person name="Klein Lankhorst R."/>
            <person name="Weitzenegger T."/>
            <person name="Bothe G."/>
            <person name="Rose M."/>
            <person name="Hauf J."/>
            <person name="Berneiser S."/>
            <person name="Hempel S."/>
            <person name="Feldpausch M."/>
            <person name="Lamberth S."/>
            <person name="Villarroel R."/>
            <person name="Gielen J."/>
            <person name="Ardiles W."/>
            <person name="Bents O."/>
            <person name="Lemcke K."/>
            <person name="Kolesov G."/>
            <person name="Mayer K.F.X."/>
            <person name="Rudd S."/>
            <person name="Schoof H."/>
            <person name="Schueller C."/>
            <person name="Zaccaria P."/>
            <person name="Mewes H.-W."/>
            <person name="Bevan M."/>
            <person name="Fransz P.F."/>
        </authorList>
    </citation>
    <scope>NUCLEOTIDE SEQUENCE [LARGE SCALE GENOMIC DNA]</scope>
    <source>
        <strain>cv. Columbia</strain>
    </source>
</reference>
<reference key="3">
    <citation type="journal article" date="2017" name="Plant J.">
        <title>Araport11: a complete reannotation of the Arabidopsis thaliana reference genome.</title>
        <authorList>
            <person name="Cheng C.Y."/>
            <person name="Krishnakumar V."/>
            <person name="Chan A.P."/>
            <person name="Thibaud-Nissen F."/>
            <person name="Schobel S."/>
            <person name="Town C.D."/>
        </authorList>
    </citation>
    <scope>GENOME REANNOTATION</scope>
    <source>
        <strain>cv. Columbia</strain>
    </source>
</reference>
<reference key="4">
    <citation type="journal article" date="2003" name="Science">
        <title>Empirical analysis of transcriptional activity in the Arabidopsis genome.</title>
        <authorList>
            <person name="Yamada K."/>
            <person name="Lim J."/>
            <person name="Dale J.M."/>
            <person name="Chen H."/>
            <person name="Shinn P."/>
            <person name="Palm C.J."/>
            <person name="Southwick A.M."/>
            <person name="Wu H.C."/>
            <person name="Kim C.J."/>
            <person name="Nguyen M."/>
            <person name="Pham P.K."/>
            <person name="Cheuk R.F."/>
            <person name="Karlin-Newmann G."/>
            <person name="Liu S.X."/>
            <person name="Lam B."/>
            <person name="Sakano H."/>
            <person name="Wu T."/>
            <person name="Yu G."/>
            <person name="Miranda M."/>
            <person name="Quach H.L."/>
            <person name="Tripp M."/>
            <person name="Chang C.H."/>
            <person name="Lee J.M."/>
            <person name="Toriumi M.J."/>
            <person name="Chan M.M."/>
            <person name="Tang C.C."/>
            <person name="Onodera C.S."/>
            <person name="Deng J.M."/>
            <person name="Akiyama K."/>
            <person name="Ansari Y."/>
            <person name="Arakawa T."/>
            <person name="Banh J."/>
            <person name="Banno F."/>
            <person name="Bowser L."/>
            <person name="Brooks S.Y."/>
            <person name="Carninci P."/>
            <person name="Chao Q."/>
            <person name="Choy N."/>
            <person name="Enju A."/>
            <person name="Goldsmith A.D."/>
            <person name="Gurjal M."/>
            <person name="Hansen N.F."/>
            <person name="Hayashizaki Y."/>
            <person name="Johnson-Hopson C."/>
            <person name="Hsuan V.W."/>
            <person name="Iida K."/>
            <person name="Karnes M."/>
            <person name="Khan S."/>
            <person name="Koesema E."/>
            <person name="Ishida J."/>
            <person name="Jiang P.X."/>
            <person name="Jones T."/>
            <person name="Kawai J."/>
            <person name="Kamiya A."/>
            <person name="Meyers C."/>
            <person name="Nakajima M."/>
            <person name="Narusaka M."/>
            <person name="Seki M."/>
            <person name="Sakurai T."/>
            <person name="Satou M."/>
            <person name="Tamse R."/>
            <person name="Vaysberg M."/>
            <person name="Wallender E.K."/>
            <person name="Wong C."/>
            <person name="Yamamura Y."/>
            <person name="Yuan S."/>
            <person name="Shinozaki K."/>
            <person name="Davis R.W."/>
            <person name="Theologis A."/>
            <person name="Ecker J.R."/>
        </authorList>
    </citation>
    <scope>NUCLEOTIDE SEQUENCE [LARGE SCALE MRNA]</scope>
    <source>
        <strain>cv. Columbia</strain>
    </source>
</reference>
<reference key="5">
    <citation type="journal article" date="2014" name="Plant Physiol.">
        <title>ABNORMAL POLLEN TUBE GUIDANCE1, an endoplasmic reticulum-localized mannosyltransferase homolog of GLYCOSYLPHOSPHATIDYLINOSITOL10 in yeast and PHOSPHATIDYLINOSITOL GLYCAN ANCHOR BIOSYNTHESIS B in human, is required for Arabidopsis pollen tube micropylar guidance and embryo development.</title>
        <authorList>
            <person name="Dai X.R."/>
            <person name="Gao X.-Q."/>
            <person name="Chen G.H."/>
            <person name="Tang L.L."/>
            <person name="Wang H."/>
            <person name="Zhang X.S."/>
        </authorList>
    </citation>
    <scope>FUNCTION</scope>
    <scope>DISRUPTION PHENOTYPE</scope>
    <scope>TISSUE SPECIFICITY</scope>
    <scope>DEVELOPMENTAL STAGE</scope>
    <scope>SUBCELLULAR LOCATION</scope>
    <source>
        <strain>cv. Columbia</strain>
    </source>
</reference>
<reference key="6">
    <citation type="journal article" date="2017" name="Plant Physiol.">
        <title>Two membrane-anchored aspartic proteases contribute to pollen and ovule development.</title>
        <authorList>
            <person name="Gao H."/>
            <person name="Zhang Y."/>
            <person name="Wang W."/>
            <person name="Zhao K."/>
            <person name="Liu C."/>
            <person name="Bai L."/>
            <person name="Li R."/>
            <person name="Guo Y."/>
        </authorList>
    </citation>
    <scope>FUNCTION</scope>
    <scope>DISRUPTION PHENOTYPE</scope>
</reference>
<feature type="chain" id="PRO_0000450670" description="Mannosyltransferase APTG1">
    <location>
        <begin position="1"/>
        <end position="548"/>
    </location>
</feature>
<feature type="transmembrane region" description="Helical" evidence="1">
    <location>
        <begin position="41"/>
        <end position="61"/>
    </location>
</feature>
<feature type="transmembrane region" description="Helical" evidence="1">
    <location>
        <begin position="98"/>
        <end position="118"/>
    </location>
</feature>
<feature type="transmembrane region" description="Helical" evidence="1">
    <location>
        <begin position="146"/>
        <end position="166"/>
    </location>
</feature>
<feature type="transmembrane region" description="Helical" evidence="1">
    <location>
        <begin position="169"/>
        <end position="189"/>
    </location>
</feature>
<feature type="transmembrane region" description="Helical" evidence="1">
    <location>
        <begin position="204"/>
        <end position="224"/>
    </location>
</feature>
<feature type="transmembrane region" description="Helical" evidence="1">
    <location>
        <begin position="238"/>
        <end position="258"/>
    </location>
</feature>
<feature type="transmembrane region" description="Helical" evidence="1">
    <location>
        <begin position="260"/>
        <end position="280"/>
    </location>
</feature>
<feature type="transmembrane region" description="Helical" evidence="1">
    <location>
        <begin position="294"/>
        <end position="314"/>
    </location>
</feature>
<feature type="transmembrane region" description="Helical" evidence="1">
    <location>
        <begin position="320"/>
        <end position="340"/>
    </location>
</feature>
<feature type="transmembrane region" description="Helical" evidence="1">
    <location>
        <begin position="342"/>
        <end position="362"/>
    </location>
</feature>
<feature type="transmembrane region" description="Helical" evidence="1">
    <location>
        <begin position="392"/>
        <end position="412"/>
    </location>
</feature>
<feature type="region of interest" description="Disordered" evidence="3">
    <location>
        <begin position="1"/>
        <end position="23"/>
    </location>
</feature>
<feature type="glycosylation site" description="N-linked (GlcNAc...) asparagine" evidence="2">
    <location>
        <position position="167"/>
    </location>
</feature>
<feature type="glycosylation site" description="N-linked (GlcNAc...) asparagine" evidence="2">
    <location>
        <position position="382"/>
    </location>
</feature>
<feature type="glycosylation site" description="N-linked (GlcNAc...) asparagine" evidence="2">
    <location>
        <position position="490"/>
    </location>
</feature>
<dbReference type="EC" id="2.4.1.-"/>
<dbReference type="EMBL" id="KJ138692">
    <property type="protein sequence ID" value="AHL38632.1"/>
    <property type="molecule type" value="mRNA"/>
</dbReference>
<dbReference type="EMBL" id="AL391149">
    <property type="protein sequence ID" value="CAC01884.1"/>
    <property type="status" value="ALT_SEQ"/>
    <property type="molecule type" value="Genomic_DNA"/>
</dbReference>
<dbReference type="EMBL" id="CP002688">
    <property type="protein sequence ID" value="AED92081.1"/>
    <property type="molecule type" value="Genomic_DNA"/>
</dbReference>
<dbReference type="EMBL" id="AY050456">
    <property type="protein sequence ID" value="AAK91470.1"/>
    <property type="molecule type" value="mRNA"/>
</dbReference>
<dbReference type="EMBL" id="AY120693">
    <property type="protein sequence ID" value="AAM52236.1"/>
    <property type="molecule type" value="mRNA"/>
</dbReference>
<dbReference type="PIR" id="T51430">
    <property type="entry name" value="T51430"/>
</dbReference>
<dbReference type="RefSeq" id="NP_568305.1">
    <property type="nucleotide sequence ID" value="NM_121489.2"/>
</dbReference>
<dbReference type="FunCoup" id="Q94A15">
    <property type="interactions" value="4618"/>
</dbReference>
<dbReference type="STRING" id="3702.Q94A15"/>
<dbReference type="CAZy" id="GT22">
    <property type="family name" value="Glycosyltransferase Family 22"/>
</dbReference>
<dbReference type="GlyCosmos" id="Q94A15">
    <property type="glycosylation" value="3 sites, No reported glycans"/>
</dbReference>
<dbReference type="GlyGen" id="Q94A15">
    <property type="glycosylation" value="4 sites"/>
</dbReference>
<dbReference type="PaxDb" id="3702-AT5G14850.1"/>
<dbReference type="ProteomicsDB" id="175714"/>
<dbReference type="EnsemblPlants" id="AT5G14850.1">
    <property type="protein sequence ID" value="AT5G14850.1"/>
    <property type="gene ID" value="AT5G14850"/>
</dbReference>
<dbReference type="GeneID" id="831337"/>
<dbReference type="Gramene" id="AT5G14850.1">
    <property type="protein sequence ID" value="AT5G14850.1"/>
    <property type="gene ID" value="AT5G14850"/>
</dbReference>
<dbReference type="KEGG" id="ath:AT5G14850"/>
<dbReference type="Araport" id="AT5G14850"/>
<dbReference type="TAIR" id="AT5G14850">
    <property type="gene designation" value="APTG1"/>
</dbReference>
<dbReference type="eggNOG" id="KOG1771">
    <property type="taxonomic scope" value="Eukaryota"/>
</dbReference>
<dbReference type="HOGENOM" id="CLU_012353_2_1_1"/>
<dbReference type="InParanoid" id="Q94A15"/>
<dbReference type="PhylomeDB" id="Q94A15"/>
<dbReference type="PRO" id="PR:Q94A15"/>
<dbReference type="Proteomes" id="UP000006548">
    <property type="component" value="Chromosome 5"/>
</dbReference>
<dbReference type="ExpressionAtlas" id="Q94A15">
    <property type="expression patterns" value="baseline and differential"/>
</dbReference>
<dbReference type="GO" id="GO:0005783">
    <property type="term" value="C:endoplasmic reticulum"/>
    <property type="evidence" value="ECO:0000314"/>
    <property type="project" value="TAIR"/>
</dbReference>
<dbReference type="GO" id="GO:0005789">
    <property type="term" value="C:endoplasmic reticulum membrane"/>
    <property type="evidence" value="ECO:0007669"/>
    <property type="project" value="UniProtKB-SubCell"/>
</dbReference>
<dbReference type="GO" id="GO:0090406">
    <property type="term" value="C:pollen tube"/>
    <property type="evidence" value="ECO:0000314"/>
    <property type="project" value="TAIR"/>
</dbReference>
<dbReference type="GO" id="GO:0000030">
    <property type="term" value="F:mannosyltransferase activity"/>
    <property type="evidence" value="ECO:0000316"/>
    <property type="project" value="TAIR"/>
</dbReference>
<dbReference type="GO" id="GO:0016255">
    <property type="term" value="P:attachment of GPI anchor to protein"/>
    <property type="evidence" value="ECO:0000315"/>
    <property type="project" value="UniProtKB"/>
</dbReference>
<dbReference type="GO" id="GO:0009793">
    <property type="term" value="P:embryo development ending in seed dormancy"/>
    <property type="evidence" value="ECO:0000315"/>
    <property type="project" value="TAIR"/>
</dbReference>
<dbReference type="GO" id="GO:0010183">
    <property type="term" value="P:pollen tube guidance"/>
    <property type="evidence" value="ECO:0000315"/>
    <property type="project" value="TAIR"/>
</dbReference>
<dbReference type="InterPro" id="IPR005599">
    <property type="entry name" value="GPI_mannosylTrfase"/>
</dbReference>
<dbReference type="PANTHER" id="PTHR22760">
    <property type="entry name" value="GLYCOSYLTRANSFERASE"/>
    <property type="match status" value="1"/>
</dbReference>
<dbReference type="PANTHER" id="PTHR22760:SF4">
    <property type="entry name" value="GPI MANNOSYLTRANSFERASE 3"/>
    <property type="match status" value="1"/>
</dbReference>
<dbReference type="Pfam" id="PF03901">
    <property type="entry name" value="Glyco_transf_22"/>
    <property type="match status" value="1"/>
</dbReference>
<keyword id="KW-0256">Endoplasmic reticulum</keyword>
<keyword id="KW-0325">Glycoprotein</keyword>
<keyword id="KW-0328">Glycosyltransferase</keyword>
<keyword id="KW-0472">Membrane</keyword>
<keyword id="KW-1185">Reference proteome</keyword>
<keyword id="KW-0808">Transferase</keyword>
<keyword id="KW-0812">Transmembrane</keyword>
<keyword id="KW-1133">Transmembrane helix</keyword>
<sequence length="548" mass="62701">MDIRKRKNAGGDGDGGADGASVNVGDEPDSFGGRIGSPRRIFLFCLAFRVVNALLIQTYFNPDEHWQSLEVAHRTIFGYGYMTWEWKRGIRSYLHPMLFAFLYKLLQVTGLDTPYIMIKAPRLMQSIFSAIGDLYLYKLSDALYGGNVATWSLFCQMANWFIFFCLNRTFSNCLETVLTIMGLYYWPCIRDSSIDYPVNRKWGLVIAALACAIRPTSAVIWLYVGMLELFLTPNKVKFIILEVIPIGSLVLGFTCLLDRLMYGSWVIVPLNFLKFNFLSSGGDYYGTHPWHWYFTQGFLVMLFTFTPFSIAGIIKSKNQKLSALILWVLAIYSILGHKEFRFVLPVLPIALIFSGYAFAQMEVSGSSSSSSVTKKKQVPRQNHTKWSPKLRLSVYFLLATNIPMALYMSLFHQRGTEDAMNYLSDEAYKGRVKSILFLMPCHSTPYYSTLHRNIPMQFLDCTPSAEKGELDESDQFLVNPLGFASELARNWSEPPSHIVLFASEETKLRDFMIQHSFKEVRRFFHAHFKVDRDLQSSVVVYVVNHAFP</sequence>